<comment type="function">
    <text evidence="1">Catalyzes the last two sequential reactions in the de novo biosynthetic pathway for UDP-N-acetylglucosamine (UDP-GlcNAc). The C-terminal domain catalyzes the transfer of acetyl group from acetyl coenzyme A to glucosamine-1-phosphate (GlcN-1-P) to produce N-acetylglucosamine-1-phosphate (GlcNAc-1-P), which is converted into UDP-GlcNAc by the transfer of uridine 5-monophosphate (from uridine 5-triphosphate), a reaction catalyzed by the N-terminal domain.</text>
</comment>
<comment type="catalytic activity">
    <reaction evidence="1">
        <text>alpha-D-glucosamine 1-phosphate + acetyl-CoA = N-acetyl-alpha-D-glucosamine 1-phosphate + CoA + H(+)</text>
        <dbReference type="Rhea" id="RHEA:13725"/>
        <dbReference type="ChEBI" id="CHEBI:15378"/>
        <dbReference type="ChEBI" id="CHEBI:57287"/>
        <dbReference type="ChEBI" id="CHEBI:57288"/>
        <dbReference type="ChEBI" id="CHEBI:57776"/>
        <dbReference type="ChEBI" id="CHEBI:58516"/>
        <dbReference type="EC" id="2.3.1.157"/>
    </reaction>
</comment>
<comment type="catalytic activity">
    <reaction evidence="1">
        <text>N-acetyl-alpha-D-glucosamine 1-phosphate + UTP + H(+) = UDP-N-acetyl-alpha-D-glucosamine + diphosphate</text>
        <dbReference type="Rhea" id="RHEA:13509"/>
        <dbReference type="ChEBI" id="CHEBI:15378"/>
        <dbReference type="ChEBI" id="CHEBI:33019"/>
        <dbReference type="ChEBI" id="CHEBI:46398"/>
        <dbReference type="ChEBI" id="CHEBI:57705"/>
        <dbReference type="ChEBI" id="CHEBI:57776"/>
        <dbReference type="EC" id="2.7.7.23"/>
    </reaction>
</comment>
<comment type="cofactor">
    <cofactor evidence="1">
        <name>Mg(2+)</name>
        <dbReference type="ChEBI" id="CHEBI:18420"/>
    </cofactor>
    <text evidence="1">Binds 1 Mg(2+) ion per subunit.</text>
</comment>
<comment type="pathway">
    <text evidence="1">Nucleotide-sugar biosynthesis; UDP-N-acetyl-alpha-D-glucosamine biosynthesis; N-acetyl-alpha-D-glucosamine 1-phosphate from alpha-D-glucosamine 6-phosphate (route II): step 2/2.</text>
</comment>
<comment type="pathway">
    <text evidence="1">Nucleotide-sugar biosynthesis; UDP-N-acetyl-alpha-D-glucosamine biosynthesis; UDP-N-acetyl-alpha-D-glucosamine from N-acetyl-alpha-D-glucosamine 1-phosphate: step 1/1.</text>
</comment>
<comment type="pathway">
    <text evidence="1">Bacterial outer membrane biogenesis; LPS lipid A biosynthesis.</text>
</comment>
<comment type="subunit">
    <text evidence="1">Homotrimer.</text>
</comment>
<comment type="subcellular location">
    <subcellularLocation>
        <location evidence="1">Cytoplasm</location>
    </subcellularLocation>
</comment>
<comment type="similarity">
    <text evidence="1">In the N-terminal section; belongs to the N-acetylglucosamine-1-phosphate uridyltransferase family.</text>
</comment>
<comment type="similarity">
    <text evidence="1">In the C-terminal section; belongs to the transferase hexapeptide repeat family.</text>
</comment>
<evidence type="ECO:0000255" key="1">
    <source>
        <dbReference type="HAMAP-Rule" id="MF_01631"/>
    </source>
</evidence>
<gene>
    <name evidence="1" type="primary">glmU</name>
    <name type="ordered locus">Maqu_3873</name>
</gene>
<feature type="chain" id="PRO_0000337726" description="Bifunctional protein GlmU">
    <location>
        <begin position="1"/>
        <end position="454"/>
    </location>
</feature>
<feature type="region of interest" description="Pyrophosphorylase" evidence="1">
    <location>
        <begin position="1"/>
        <end position="228"/>
    </location>
</feature>
<feature type="region of interest" description="Linker" evidence="1">
    <location>
        <begin position="229"/>
        <end position="249"/>
    </location>
</feature>
<feature type="region of interest" description="N-acetyltransferase" evidence="1">
    <location>
        <begin position="250"/>
        <end position="454"/>
    </location>
</feature>
<feature type="active site" description="Proton acceptor" evidence="1">
    <location>
        <position position="362"/>
    </location>
</feature>
<feature type="binding site" evidence="1">
    <location>
        <begin position="9"/>
        <end position="12"/>
    </location>
    <ligand>
        <name>UDP-N-acetyl-alpha-D-glucosamine</name>
        <dbReference type="ChEBI" id="CHEBI:57705"/>
    </ligand>
</feature>
<feature type="binding site" evidence="1">
    <location>
        <position position="23"/>
    </location>
    <ligand>
        <name>UDP-N-acetyl-alpha-D-glucosamine</name>
        <dbReference type="ChEBI" id="CHEBI:57705"/>
    </ligand>
</feature>
<feature type="binding site" evidence="1">
    <location>
        <position position="74"/>
    </location>
    <ligand>
        <name>UDP-N-acetyl-alpha-D-glucosamine</name>
        <dbReference type="ChEBI" id="CHEBI:57705"/>
    </ligand>
</feature>
<feature type="binding site" evidence="1">
    <location>
        <begin position="79"/>
        <end position="80"/>
    </location>
    <ligand>
        <name>UDP-N-acetyl-alpha-D-glucosamine</name>
        <dbReference type="ChEBI" id="CHEBI:57705"/>
    </ligand>
</feature>
<feature type="binding site" evidence="1">
    <location>
        <begin position="101"/>
        <end position="103"/>
    </location>
    <ligand>
        <name>UDP-N-acetyl-alpha-D-glucosamine</name>
        <dbReference type="ChEBI" id="CHEBI:57705"/>
    </ligand>
</feature>
<feature type="binding site" evidence="1">
    <location>
        <position position="103"/>
    </location>
    <ligand>
        <name>Mg(2+)</name>
        <dbReference type="ChEBI" id="CHEBI:18420"/>
    </ligand>
</feature>
<feature type="binding site" evidence="1">
    <location>
        <position position="138"/>
    </location>
    <ligand>
        <name>UDP-N-acetyl-alpha-D-glucosamine</name>
        <dbReference type="ChEBI" id="CHEBI:57705"/>
    </ligand>
</feature>
<feature type="binding site" evidence="1">
    <location>
        <position position="153"/>
    </location>
    <ligand>
        <name>UDP-N-acetyl-alpha-D-glucosamine</name>
        <dbReference type="ChEBI" id="CHEBI:57705"/>
    </ligand>
</feature>
<feature type="binding site" evidence="1">
    <location>
        <position position="168"/>
    </location>
    <ligand>
        <name>UDP-N-acetyl-alpha-D-glucosamine</name>
        <dbReference type="ChEBI" id="CHEBI:57705"/>
    </ligand>
</feature>
<feature type="binding site" evidence="1">
    <location>
        <position position="226"/>
    </location>
    <ligand>
        <name>Mg(2+)</name>
        <dbReference type="ChEBI" id="CHEBI:18420"/>
    </ligand>
</feature>
<feature type="binding site" evidence="1">
    <location>
        <position position="226"/>
    </location>
    <ligand>
        <name>UDP-N-acetyl-alpha-D-glucosamine</name>
        <dbReference type="ChEBI" id="CHEBI:57705"/>
    </ligand>
</feature>
<feature type="binding site" evidence="1">
    <location>
        <position position="332"/>
    </location>
    <ligand>
        <name>UDP-N-acetyl-alpha-D-glucosamine</name>
        <dbReference type="ChEBI" id="CHEBI:57705"/>
    </ligand>
</feature>
<feature type="binding site" evidence="1">
    <location>
        <position position="350"/>
    </location>
    <ligand>
        <name>UDP-N-acetyl-alpha-D-glucosamine</name>
        <dbReference type="ChEBI" id="CHEBI:57705"/>
    </ligand>
</feature>
<feature type="binding site" evidence="1">
    <location>
        <position position="365"/>
    </location>
    <ligand>
        <name>UDP-N-acetyl-alpha-D-glucosamine</name>
        <dbReference type="ChEBI" id="CHEBI:57705"/>
    </ligand>
</feature>
<feature type="binding site" evidence="1">
    <location>
        <position position="376"/>
    </location>
    <ligand>
        <name>UDP-N-acetyl-alpha-D-glucosamine</name>
        <dbReference type="ChEBI" id="CHEBI:57705"/>
    </ligand>
</feature>
<feature type="binding site" evidence="1">
    <location>
        <position position="379"/>
    </location>
    <ligand>
        <name>acetyl-CoA</name>
        <dbReference type="ChEBI" id="CHEBI:57288"/>
    </ligand>
</feature>
<feature type="binding site" evidence="1">
    <location>
        <begin position="385"/>
        <end position="386"/>
    </location>
    <ligand>
        <name>acetyl-CoA</name>
        <dbReference type="ChEBI" id="CHEBI:57288"/>
    </ligand>
</feature>
<feature type="binding site" evidence="1">
    <location>
        <position position="404"/>
    </location>
    <ligand>
        <name>acetyl-CoA</name>
        <dbReference type="ChEBI" id="CHEBI:57288"/>
    </ligand>
</feature>
<feature type="binding site" evidence="1">
    <location>
        <position position="422"/>
    </location>
    <ligand>
        <name>acetyl-CoA</name>
        <dbReference type="ChEBI" id="CHEBI:57288"/>
    </ligand>
</feature>
<feature type="binding site" evidence="1">
    <location>
        <position position="439"/>
    </location>
    <ligand>
        <name>acetyl-CoA</name>
        <dbReference type="ChEBI" id="CHEBI:57288"/>
    </ligand>
</feature>
<reference key="1">
    <citation type="journal article" date="2011" name="Appl. Environ. Microbiol.">
        <title>Genomic potential of Marinobacter aquaeolei, a biogeochemical 'opportunitroph'.</title>
        <authorList>
            <person name="Singer E."/>
            <person name="Webb E.A."/>
            <person name="Nelson W.C."/>
            <person name="Heidelberg J.F."/>
            <person name="Ivanova N."/>
            <person name="Pati A."/>
            <person name="Edwards K.J."/>
        </authorList>
    </citation>
    <scope>NUCLEOTIDE SEQUENCE [LARGE SCALE GENOMIC DNA]</scope>
    <source>
        <strain>ATCC 700491 / DSM 11845 / VT8</strain>
    </source>
</reference>
<accession>A1U7H2</accession>
<keyword id="KW-0012">Acyltransferase</keyword>
<keyword id="KW-0133">Cell shape</keyword>
<keyword id="KW-0961">Cell wall biogenesis/degradation</keyword>
<keyword id="KW-0963">Cytoplasm</keyword>
<keyword id="KW-0460">Magnesium</keyword>
<keyword id="KW-0479">Metal-binding</keyword>
<keyword id="KW-0511">Multifunctional enzyme</keyword>
<keyword id="KW-0548">Nucleotidyltransferase</keyword>
<keyword id="KW-0573">Peptidoglycan synthesis</keyword>
<keyword id="KW-0677">Repeat</keyword>
<keyword id="KW-0808">Transferase</keyword>
<dbReference type="EC" id="2.7.7.23" evidence="1"/>
<dbReference type="EC" id="2.3.1.157" evidence="1"/>
<dbReference type="EMBL" id="CP000514">
    <property type="protein sequence ID" value="ABM20941.1"/>
    <property type="molecule type" value="Genomic_DNA"/>
</dbReference>
<dbReference type="RefSeq" id="WP_011787274.1">
    <property type="nucleotide sequence ID" value="NC_008740.1"/>
</dbReference>
<dbReference type="SMR" id="A1U7H2"/>
<dbReference type="STRING" id="351348.Maqu_3873"/>
<dbReference type="KEGG" id="maq:Maqu_3873"/>
<dbReference type="eggNOG" id="COG1207">
    <property type="taxonomic scope" value="Bacteria"/>
</dbReference>
<dbReference type="HOGENOM" id="CLU_029499_15_2_6"/>
<dbReference type="OrthoDB" id="9775031at2"/>
<dbReference type="UniPathway" id="UPA00113">
    <property type="reaction ID" value="UER00532"/>
</dbReference>
<dbReference type="UniPathway" id="UPA00113">
    <property type="reaction ID" value="UER00533"/>
</dbReference>
<dbReference type="UniPathway" id="UPA00973"/>
<dbReference type="Proteomes" id="UP000000998">
    <property type="component" value="Chromosome"/>
</dbReference>
<dbReference type="GO" id="GO:0005737">
    <property type="term" value="C:cytoplasm"/>
    <property type="evidence" value="ECO:0007669"/>
    <property type="project" value="UniProtKB-SubCell"/>
</dbReference>
<dbReference type="GO" id="GO:0016020">
    <property type="term" value="C:membrane"/>
    <property type="evidence" value="ECO:0007669"/>
    <property type="project" value="GOC"/>
</dbReference>
<dbReference type="GO" id="GO:0019134">
    <property type="term" value="F:glucosamine-1-phosphate N-acetyltransferase activity"/>
    <property type="evidence" value="ECO:0007669"/>
    <property type="project" value="UniProtKB-UniRule"/>
</dbReference>
<dbReference type="GO" id="GO:0000287">
    <property type="term" value="F:magnesium ion binding"/>
    <property type="evidence" value="ECO:0007669"/>
    <property type="project" value="UniProtKB-UniRule"/>
</dbReference>
<dbReference type="GO" id="GO:0003977">
    <property type="term" value="F:UDP-N-acetylglucosamine diphosphorylase activity"/>
    <property type="evidence" value="ECO:0007669"/>
    <property type="project" value="UniProtKB-UniRule"/>
</dbReference>
<dbReference type="GO" id="GO:0000902">
    <property type="term" value="P:cell morphogenesis"/>
    <property type="evidence" value="ECO:0007669"/>
    <property type="project" value="UniProtKB-UniRule"/>
</dbReference>
<dbReference type="GO" id="GO:0071555">
    <property type="term" value="P:cell wall organization"/>
    <property type="evidence" value="ECO:0007669"/>
    <property type="project" value="UniProtKB-KW"/>
</dbReference>
<dbReference type="GO" id="GO:0009245">
    <property type="term" value="P:lipid A biosynthetic process"/>
    <property type="evidence" value="ECO:0007669"/>
    <property type="project" value="UniProtKB-UniRule"/>
</dbReference>
<dbReference type="GO" id="GO:0009252">
    <property type="term" value="P:peptidoglycan biosynthetic process"/>
    <property type="evidence" value="ECO:0007669"/>
    <property type="project" value="UniProtKB-UniRule"/>
</dbReference>
<dbReference type="GO" id="GO:0008360">
    <property type="term" value="P:regulation of cell shape"/>
    <property type="evidence" value="ECO:0007669"/>
    <property type="project" value="UniProtKB-KW"/>
</dbReference>
<dbReference type="GO" id="GO:0006048">
    <property type="term" value="P:UDP-N-acetylglucosamine biosynthetic process"/>
    <property type="evidence" value="ECO:0007669"/>
    <property type="project" value="UniProtKB-UniPathway"/>
</dbReference>
<dbReference type="CDD" id="cd02540">
    <property type="entry name" value="GT2_GlmU_N_bac"/>
    <property type="match status" value="1"/>
</dbReference>
<dbReference type="CDD" id="cd03353">
    <property type="entry name" value="LbH_GlmU_C"/>
    <property type="match status" value="1"/>
</dbReference>
<dbReference type="Gene3D" id="2.160.10.10">
    <property type="entry name" value="Hexapeptide repeat proteins"/>
    <property type="match status" value="1"/>
</dbReference>
<dbReference type="Gene3D" id="3.90.550.10">
    <property type="entry name" value="Spore Coat Polysaccharide Biosynthesis Protein SpsA, Chain A"/>
    <property type="match status" value="1"/>
</dbReference>
<dbReference type="HAMAP" id="MF_01631">
    <property type="entry name" value="GlmU"/>
    <property type="match status" value="1"/>
</dbReference>
<dbReference type="InterPro" id="IPR005882">
    <property type="entry name" value="Bifunctional_GlmU"/>
</dbReference>
<dbReference type="InterPro" id="IPR050065">
    <property type="entry name" value="GlmU-like"/>
</dbReference>
<dbReference type="InterPro" id="IPR038009">
    <property type="entry name" value="GlmU_C_LbH"/>
</dbReference>
<dbReference type="InterPro" id="IPR001451">
    <property type="entry name" value="Hexapep"/>
</dbReference>
<dbReference type="InterPro" id="IPR018357">
    <property type="entry name" value="Hexapep_transf_CS"/>
</dbReference>
<dbReference type="InterPro" id="IPR025877">
    <property type="entry name" value="MobA-like_NTP_Trfase"/>
</dbReference>
<dbReference type="InterPro" id="IPR029044">
    <property type="entry name" value="Nucleotide-diphossugar_trans"/>
</dbReference>
<dbReference type="InterPro" id="IPR011004">
    <property type="entry name" value="Trimer_LpxA-like_sf"/>
</dbReference>
<dbReference type="NCBIfam" id="TIGR01173">
    <property type="entry name" value="glmU"/>
    <property type="match status" value="1"/>
</dbReference>
<dbReference type="PANTHER" id="PTHR43584:SF3">
    <property type="entry name" value="BIFUNCTIONAL PROTEIN GLMU"/>
    <property type="match status" value="1"/>
</dbReference>
<dbReference type="PANTHER" id="PTHR43584">
    <property type="entry name" value="NUCLEOTIDYL TRANSFERASE"/>
    <property type="match status" value="1"/>
</dbReference>
<dbReference type="Pfam" id="PF00132">
    <property type="entry name" value="Hexapep"/>
    <property type="match status" value="1"/>
</dbReference>
<dbReference type="Pfam" id="PF14602">
    <property type="entry name" value="Hexapep_2"/>
    <property type="match status" value="1"/>
</dbReference>
<dbReference type="Pfam" id="PF12804">
    <property type="entry name" value="NTP_transf_3"/>
    <property type="match status" value="1"/>
</dbReference>
<dbReference type="SUPFAM" id="SSF53448">
    <property type="entry name" value="Nucleotide-diphospho-sugar transferases"/>
    <property type="match status" value="1"/>
</dbReference>
<dbReference type="SUPFAM" id="SSF51161">
    <property type="entry name" value="Trimeric LpxA-like enzymes"/>
    <property type="match status" value="1"/>
</dbReference>
<dbReference type="PROSITE" id="PS00101">
    <property type="entry name" value="HEXAPEP_TRANSFERASES"/>
    <property type="match status" value="1"/>
</dbReference>
<proteinExistence type="inferred from homology"/>
<organism>
    <name type="scientific">Marinobacter nauticus (strain ATCC 700491 / DSM 11845 / VT8)</name>
    <name type="common">Marinobacter aquaeolei</name>
    <dbReference type="NCBI Taxonomy" id="351348"/>
    <lineage>
        <taxon>Bacteria</taxon>
        <taxon>Pseudomonadati</taxon>
        <taxon>Pseudomonadota</taxon>
        <taxon>Gammaproteobacteria</taxon>
        <taxon>Pseudomonadales</taxon>
        <taxon>Marinobacteraceae</taxon>
        <taxon>Marinobacter</taxon>
    </lineage>
</organism>
<protein>
    <recommendedName>
        <fullName evidence="1">Bifunctional protein GlmU</fullName>
    </recommendedName>
    <domain>
        <recommendedName>
            <fullName evidence="1">UDP-N-acetylglucosamine pyrophosphorylase</fullName>
            <ecNumber evidence="1">2.7.7.23</ecNumber>
        </recommendedName>
        <alternativeName>
            <fullName evidence="1">N-acetylglucosamine-1-phosphate uridyltransferase</fullName>
        </alternativeName>
    </domain>
    <domain>
        <recommendedName>
            <fullName evidence="1">Glucosamine-1-phosphate N-acetyltransferase</fullName>
            <ecNumber evidence="1">2.3.1.157</ecNumber>
        </recommendedName>
    </domain>
</protein>
<name>GLMU_MARN8</name>
<sequence length="454" mass="48330">MSPLHVVILAAGQGSRMKSSLPKVLHPVAGKAMLHHVVDTAKQLGAEKIHTVIGHGADQVRASLEDDSVNWVLQTEQLGTGHAVAQALPALPDDARVLVLYGDVPLTRKDTLETMVADLDERNLALLTVDMDNPHGYGRIVRNEQGLVQAIVEQKDATAEQQQIQEVNTGILAVSASHLKQWLPALSNSNAQGEYYLTDIIAMAVDHGLSVTVSQPLNPFEVQGVNNRLQLAELERWYQRQQAERLMTEGASLADPARIEVRGELTIGNDLWIDVNAVFEGRVSLGNNVVIGPNCVIKDATIADGAEIKANSVIEGAVVGANAQIGPFARLRPGTELAANTKIGNFVETKKAVVGEGSKINHLSYVGDASLGRNVNVGAGTITCNYDGVNKHQTVLGDGVFVGSNTSLVAPVNVAEQATIGAGSTITRDISKGELAVARGKQRNIAGWERPKKA</sequence>